<gene>
    <name evidence="1" type="primary">murB</name>
    <name type="ordered locus">Tlet_0539</name>
</gene>
<keyword id="KW-0131">Cell cycle</keyword>
<keyword id="KW-0132">Cell division</keyword>
<keyword id="KW-0133">Cell shape</keyword>
<keyword id="KW-0961">Cell wall biogenesis/degradation</keyword>
<keyword id="KW-0963">Cytoplasm</keyword>
<keyword id="KW-0274">FAD</keyword>
<keyword id="KW-0285">Flavoprotein</keyword>
<keyword id="KW-0521">NADP</keyword>
<keyword id="KW-0560">Oxidoreductase</keyword>
<keyword id="KW-0573">Peptidoglycan synthesis</keyword>
<keyword id="KW-1185">Reference proteome</keyword>
<sequence length="284" mass="31515">MERDFCEIKLDEPLKYHTSFKIGGPARLFVVPNSIEGLICALSHFPDAKILGRGTNILAPDSGVDVVISTVNLNKCFVDDELIVCESGASLFSVCKKASHNSLSGLEFAYGIPGSVGGAIYMNAGAYGGQICDVVAWVEVYDGEKVMTLDRSQLEFSYRKSIFQRTRWMILKAAFKLKKADMNEINNAMEEIMTRRMESQPMDMPSAGSVFKKPGEDFYVARVIEEIGLKGLRVGDAQISTKHAGFIVNLGEARSSDVLKLIEIIRHRVKEHCGIQLQLEVEIW</sequence>
<feature type="chain" id="PRO_0000332519" description="UDP-N-acetylenolpyruvoylglucosamine reductase">
    <location>
        <begin position="1"/>
        <end position="284"/>
    </location>
</feature>
<feature type="domain" description="FAD-binding PCMH-type" evidence="1">
    <location>
        <begin position="21"/>
        <end position="180"/>
    </location>
</feature>
<feature type="active site" evidence="1">
    <location>
        <position position="159"/>
    </location>
</feature>
<feature type="active site" description="Proton donor" evidence="1">
    <location>
        <position position="209"/>
    </location>
</feature>
<feature type="active site" evidence="1">
    <location>
        <position position="280"/>
    </location>
</feature>
<name>MURB_PSELT</name>
<comment type="function">
    <text evidence="1">Cell wall formation.</text>
</comment>
<comment type="catalytic activity">
    <reaction evidence="1">
        <text>UDP-N-acetyl-alpha-D-muramate + NADP(+) = UDP-N-acetyl-3-O-(1-carboxyvinyl)-alpha-D-glucosamine + NADPH + H(+)</text>
        <dbReference type="Rhea" id="RHEA:12248"/>
        <dbReference type="ChEBI" id="CHEBI:15378"/>
        <dbReference type="ChEBI" id="CHEBI:57783"/>
        <dbReference type="ChEBI" id="CHEBI:58349"/>
        <dbReference type="ChEBI" id="CHEBI:68483"/>
        <dbReference type="ChEBI" id="CHEBI:70757"/>
        <dbReference type="EC" id="1.3.1.98"/>
    </reaction>
</comment>
<comment type="cofactor">
    <cofactor evidence="1">
        <name>FAD</name>
        <dbReference type="ChEBI" id="CHEBI:57692"/>
    </cofactor>
</comment>
<comment type="pathway">
    <text evidence="1">Cell wall biogenesis; peptidoglycan biosynthesis.</text>
</comment>
<comment type="subcellular location">
    <subcellularLocation>
        <location evidence="1">Cytoplasm</location>
    </subcellularLocation>
</comment>
<comment type="similarity">
    <text evidence="1">Belongs to the MurB family.</text>
</comment>
<protein>
    <recommendedName>
        <fullName evidence="1">UDP-N-acetylenolpyruvoylglucosamine reductase</fullName>
        <ecNumber evidence="1">1.3.1.98</ecNumber>
    </recommendedName>
    <alternativeName>
        <fullName evidence="1">UDP-N-acetylmuramate dehydrogenase</fullName>
    </alternativeName>
</protein>
<organism>
    <name type="scientific">Pseudothermotoga lettingae (strain ATCC BAA-301 / DSM 14385 / NBRC 107922 / TMO)</name>
    <name type="common">Thermotoga lettingae</name>
    <dbReference type="NCBI Taxonomy" id="416591"/>
    <lineage>
        <taxon>Bacteria</taxon>
        <taxon>Thermotogati</taxon>
        <taxon>Thermotogota</taxon>
        <taxon>Thermotogae</taxon>
        <taxon>Thermotogales</taxon>
        <taxon>Thermotogaceae</taxon>
        <taxon>Pseudothermotoga</taxon>
    </lineage>
</organism>
<proteinExistence type="inferred from homology"/>
<evidence type="ECO:0000255" key="1">
    <source>
        <dbReference type="HAMAP-Rule" id="MF_00037"/>
    </source>
</evidence>
<accession>A8F4M2</accession>
<reference key="1">
    <citation type="submission" date="2007-08" db="EMBL/GenBank/DDBJ databases">
        <title>Complete sequence of Thermotoga lettingae TMO.</title>
        <authorList>
            <consortium name="US DOE Joint Genome Institute"/>
            <person name="Copeland A."/>
            <person name="Lucas S."/>
            <person name="Lapidus A."/>
            <person name="Barry K."/>
            <person name="Glavina del Rio T."/>
            <person name="Dalin E."/>
            <person name="Tice H."/>
            <person name="Pitluck S."/>
            <person name="Foster B."/>
            <person name="Bruce D."/>
            <person name="Schmutz J."/>
            <person name="Larimer F."/>
            <person name="Land M."/>
            <person name="Hauser L."/>
            <person name="Kyrpides N."/>
            <person name="Mikhailova N."/>
            <person name="Nelson K."/>
            <person name="Gogarten J.P."/>
            <person name="Noll K."/>
            <person name="Richardson P."/>
        </authorList>
    </citation>
    <scope>NUCLEOTIDE SEQUENCE [LARGE SCALE GENOMIC DNA]</scope>
    <source>
        <strain>ATCC BAA-301 / DSM 14385 / NBRC 107922 / TMO</strain>
    </source>
</reference>
<dbReference type="EC" id="1.3.1.98" evidence="1"/>
<dbReference type="EMBL" id="CP000812">
    <property type="protein sequence ID" value="ABV33106.1"/>
    <property type="molecule type" value="Genomic_DNA"/>
</dbReference>
<dbReference type="RefSeq" id="WP_012002587.1">
    <property type="nucleotide sequence ID" value="NZ_BSDV01000001.1"/>
</dbReference>
<dbReference type="SMR" id="A8F4M2"/>
<dbReference type="STRING" id="416591.Tlet_0539"/>
<dbReference type="KEGG" id="tle:Tlet_0539"/>
<dbReference type="eggNOG" id="COG0812">
    <property type="taxonomic scope" value="Bacteria"/>
</dbReference>
<dbReference type="HOGENOM" id="CLU_035304_1_1_0"/>
<dbReference type="OrthoDB" id="9804753at2"/>
<dbReference type="UniPathway" id="UPA00219"/>
<dbReference type="Proteomes" id="UP000002016">
    <property type="component" value="Chromosome"/>
</dbReference>
<dbReference type="GO" id="GO:0005829">
    <property type="term" value="C:cytosol"/>
    <property type="evidence" value="ECO:0007669"/>
    <property type="project" value="TreeGrafter"/>
</dbReference>
<dbReference type="GO" id="GO:0071949">
    <property type="term" value="F:FAD binding"/>
    <property type="evidence" value="ECO:0007669"/>
    <property type="project" value="InterPro"/>
</dbReference>
<dbReference type="GO" id="GO:0008762">
    <property type="term" value="F:UDP-N-acetylmuramate dehydrogenase activity"/>
    <property type="evidence" value="ECO:0007669"/>
    <property type="project" value="UniProtKB-UniRule"/>
</dbReference>
<dbReference type="GO" id="GO:0051301">
    <property type="term" value="P:cell division"/>
    <property type="evidence" value="ECO:0007669"/>
    <property type="project" value="UniProtKB-KW"/>
</dbReference>
<dbReference type="GO" id="GO:0071555">
    <property type="term" value="P:cell wall organization"/>
    <property type="evidence" value="ECO:0007669"/>
    <property type="project" value="UniProtKB-KW"/>
</dbReference>
<dbReference type="GO" id="GO:0009252">
    <property type="term" value="P:peptidoglycan biosynthetic process"/>
    <property type="evidence" value="ECO:0007669"/>
    <property type="project" value="UniProtKB-UniRule"/>
</dbReference>
<dbReference type="GO" id="GO:0008360">
    <property type="term" value="P:regulation of cell shape"/>
    <property type="evidence" value="ECO:0007669"/>
    <property type="project" value="UniProtKB-KW"/>
</dbReference>
<dbReference type="Gene3D" id="3.30.465.10">
    <property type="match status" value="1"/>
</dbReference>
<dbReference type="Gene3D" id="3.90.78.10">
    <property type="entry name" value="UDP-N-acetylenolpyruvoylglucosamine reductase, C-terminal domain"/>
    <property type="match status" value="1"/>
</dbReference>
<dbReference type="Gene3D" id="3.30.43.10">
    <property type="entry name" value="Uridine Diphospho-n-acetylenolpyruvylglucosamine Reductase, domain 2"/>
    <property type="match status" value="1"/>
</dbReference>
<dbReference type="HAMAP" id="MF_00037">
    <property type="entry name" value="MurB"/>
    <property type="match status" value="1"/>
</dbReference>
<dbReference type="InterPro" id="IPR016166">
    <property type="entry name" value="FAD-bd_PCMH"/>
</dbReference>
<dbReference type="InterPro" id="IPR036318">
    <property type="entry name" value="FAD-bd_PCMH-like_sf"/>
</dbReference>
<dbReference type="InterPro" id="IPR016167">
    <property type="entry name" value="FAD-bd_PCMH_sub1"/>
</dbReference>
<dbReference type="InterPro" id="IPR016169">
    <property type="entry name" value="FAD-bd_PCMH_sub2"/>
</dbReference>
<dbReference type="InterPro" id="IPR003170">
    <property type="entry name" value="MurB"/>
</dbReference>
<dbReference type="InterPro" id="IPR011601">
    <property type="entry name" value="MurB_C"/>
</dbReference>
<dbReference type="InterPro" id="IPR036635">
    <property type="entry name" value="MurB_C_sf"/>
</dbReference>
<dbReference type="InterPro" id="IPR006094">
    <property type="entry name" value="Oxid_FAD_bind_N"/>
</dbReference>
<dbReference type="NCBIfam" id="TIGR00179">
    <property type="entry name" value="murB"/>
    <property type="match status" value="1"/>
</dbReference>
<dbReference type="NCBIfam" id="NF010480">
    <property type="entry name" value="PRK13905.1"/>
    <property type="match status" value="1"/>
</dbReference>
<dbReference type="PANTHER" id="PTHR21071">
    <property type="entry name" value="UDP-N-ACETYLENOLPYRUVOYLGLUCOSAMINE REDUCTASE"/>
    <property type="match status" value="1"/>
</dbReference>
<dbReference type="PANTHER" id="PTHR21071:SF4">
    <property type="entry name" value="UDP-N-ACETYLENOLPYRUVOYLGLUCOSAMINE REDUCTASE"/>
    <property type="match status" value="1"/>
</dbReference>
<dbReference type="Pfam" id="PF01565">
    <property type="entry name" value="FAD_binding_4"/>
    <property type="match status" value="1"/>
</dbReference>
<dbReference type="Pfam" id="PF02873">
    <property type="entry name" value="MurB_C"/>
    <property type="match status" value="1"/>
</dbReference>
<dbReference type="SUPFAM" id="SSF56176">
    <property type="entry name" value="FAD-binding/transporter-associated domain-like"/>
    <property type="match status" value="1"/>
</dbReference>
<dbReference type="SUPFAM" id="SSF56194">
    <property type="entry name" value="Uridine diphospho-N-Acetylenolpyruvylglucosamine reductase, MurB, C-terminal domain"/>
    <property type="match status" value="1"/>
</dbReference>
<dbReference type="PROSITE" id="PS51387">
    <property type="entry name" value="FAD_PCMH"/>
    <property type="match status" value="1"/>
</dbReference>